<feature type="chain" id="PRO_0000384790" description="Ribosome maturation factor RimP">
    <location>
        <begin position="1"/>
        <end position="147"/>
    </location>
</feature>
<reference key="1">
    <citation type="journal article" date="2009" name="J. Bacteriol.">
        <title>Complete and draft genome sequences of six members of the Aquificales.</title>
        <authorList>
            <person name="Reysenbach A.-L."/>
            <person name="Hamamura N."/>
            <person name="Podar M."/>
            <person name="Griffiths E."/>
            <person name="Ferreira S."/>
            <person name="Hochstein R."/>
            <person name="Heidelberg J."/>
            <person name="Johnson J."/>
            <person name="Mead D."/>
            <person name="Pohorille A."/>
            <person name="Sarmiento M."/>
            <person name="Schweighofer K."/>
            <person name="Seshadri R."/>
            <person name="Voytek M.A."/>
        </authorList>
    </citation>
    <scope>NUCLEOTIDE SEQUENCE [LARGE SCALE GENOMIC DNA]</scope>
    <source>
        <strain>YO3AOP1</strain>
    </source>
</reference>
<sequence length="147" mass="17161">MKVEEKVKELLLPILEERDFKLVDIEFIPSKRPILRIYIYNPEGTSIDDCEWVSKRIGALLDVEDLIDKAYILEVSSPGLDRKFKNIEEYDIFKGRDVVVKTKEPINEKKVFKGTLLGLEDEKVKIKENEETVEIPFENVSQTKLDF</sequence>
<protein>
    <recommendedName>
        <fullName evidence="1">Ribosome maturation factor RimP</fullName>
    </recommendedName>
</protein>
<gene>
    <name evidence="1" type="primary">rimP</name>
    <name type="ordered locus">SYO3AOP1_0573</name>
</gene>
<organism>
    <name type="scientific">Sulfurihydrogenibium sp. (strain YO3AOP1)</name>
    <dbReference type="NCBI Taxonomy" id="436114"/>
    <lineage>
        <taxon>Bacteria</taxon>
        <taxon>Pseudomonadati</taxon>
        <taxon>Aquificota</taxon>
        <taxon>Aquificia</taxon>
        <taxon>Aquificales</taxon>
        <taxon>Hydrogenothermaceae</taxon>
        <taxon>Sulfurihydrogenibium</taxon>
    </lineage>
</organism>
<name>RIMP_SULSY</name>
<comment type="function">
    <text evidence="1">Required for maturation of 30S ribosomal subunits.</text>
</comment>
<comment type="subcellular location">
    <subcellularLocation>
        <location evidence="1">Cytoplasm</location>
    </subcellularLocation>
</comment>
<comment type="similarity">
    <text evidence="1">Belongs to the RimP family.</text>
</comment>
<evidence type="ECO:0000255" key="1">
    <source>
        <dbReference type="HAMAP-Rule" id="MF_01077"/>
    </source>
</evidence>
<accession>B2V8D8</accession>
<keyword id="KW-0963">Cytoplasm</keyword>
<keyword id="KW-0690">Ribosome biogenesis</keyword>
<proteinExistence type="inferred from homology"/>
<dbReference type="EMBL" id="CP001080">
    <property type="protein sequence ID" value="ACD66211.1"/>
    <property type="molecule type" value="Genomic_DNA"/>
</dbReference>
<dbReference type="RefSeq" id="WP_012459291.1">
    <property type="nucleotide sequence ID" value="NC_010730.1"/>
</dbReference>
<dbReference type="SMR" id="B2V8D8"/>
<dbReference type="STRING" id="436114.SYO3AOP1_0573"/>
<dbReference type="KEGG" id="sul:SYO3AOP1_0573"/>
<dbReference type="eggNOG" id="COG0779">
    <property type="taxonomic scope" value="Bacteria"/>
</dbReference>
<dbReference type="HOGENOM" id="CLU_070525_2_2_0"/>
<dbReference type="GO" id="GO:0005829">
    <property type="term" value="C:cytosol"/>
    <property type="evidence" value="ECO:0007669"/>
    <property type="project" value="TreeGrafter"/>
</dbReference>
<dbReference type="GO" id="GO:0000028">
    <property type="term" value="P:ribosomal small subunit assembly"/>
    <property type="evidence" value="ECO:0007669"/>
    <property type="project" value="TreeGrafter"/>
</dbReference>
<dbReference type="GO" id="GO:0006412">
    <property type="term" value="P:translation"/>
    <property type="evidence" value="ECO:0007669"/>
    <property type="project" value="TreeGrafter"/>
</dbReference>
<dbReference type="CDD" id="cd01734">
    <property type="entry name" value="YlxS_C"/>
    <property type="match status" value="1"/>
</dbReference>
<dbReference type="FunFam" id="3.30.300.70:FF:000001">
    <property type="entry name" value="Ribosome maturation factor RimP"/>
    <property type="match status" value="1"/>
</dbReference>
<dbReference type="Gene3D" id="2.30.30.180">
    <property type="entry name" value="Ribosome maturation factor RimP, C-terminal domain"/>
    <property type="match status" value="1"/>
</dbReference>
<dbReference type="Gene3D" id="3.30.300.70">
    <property type="entry name" value="RimP-like superfamily, N-terminal"/>
    <property type="match status" value="1"/>
</dbReference>
<dbReference type="HAMAP" id="MF_01077">
    <property type="entry name" value="RimP"/>
    <property type="match status" value="1"/>
</dbReference>
<dbReference type="InterPro" id="IPR003728">
    <property type="entry name" value="Ribosome_maturation_RimP"/>
</dbReference>
<dbReference type="InterPro" id="IPR028998">
    <property type="entry name" value="RimP_C"/>
</dbReference>
<dbReference type="InterPro" id="IPR036847">
    <property type="entry name" value="RimP_C_sf"/>
</dbReference>
<dbReference type="InterPro" id="IPR028989">
    <property type="entry name" value="RimP_N"/>
</dbReference>
<dbReference type="InterPro" id="IPR035956">
    <property type="entry name" value="RimP_N_sf"/>
</dbReference>
<dbReference type="PANTHER" id="PTHR33867">
    <property type="entry name" value="RIBOSOME MATURATION FACTOR RIMP"/>
    <property type="match status" value="1"/>
</dbReference>
<dbReference type="PANTHER" id="PTHR33867:SF1">
    <property type="entry name" value="RIBOSOME MATURATION FACTOR RIMP"/>
    <property type="match status" value="1"/>
</dbReference>
<dbReference type="Pfam" id="PF17384">
    <property type="entry name" value="DUF150_C"/>
    <property type="match status" value="1"/>
</dbReference>
<dbReference type="Pfam" id="PF02576">
    <property type="entry name" value="RimP_N"/>
    <property type="match status" value="1"/>
</dbReference>
<dbReference type="SUPFAM" id="SSF74942">
    <property type="entry name" value="YhbC-like, C-terminal domain"/>
    <property type="match status" value="1"/>
</dbReference>
<dbReference type="SUPFAM" id="SSF75420">
    <property type="entry name" value="YhbC-like, N-terminal domain"/>
    <property type="match status" value="1"/>
</dbReference>